<proteinExistence type="evidence at transcript level"/>
<keyword id="KW-0472">Membrane</keyword>
<keyword id="KW-0496">Mitochondrion</keyword>
<keyword id="KW-1000">Mitochondrion outer membrane</keyword>
<keyword id="KW-1185">Reference proteome</keyword>
<keyword id="KW-0812">Transmembrane</keyword>
<keyword id="KW-1133">Transmembrane helix</keyword>
<protein>
    <recommendedName>
        <fullName evidence="1">Mitoguardin 2</fullName>
    </recommendedName>
    <alternativeName>
        <fullName evidence="4">Protein FAM73B</fullName>
    </alternativeName>
</protein>
<reference key="1">
    <citation type="submission" date="2004-05" db="EMBL/GenBank/DDBJ databases">
        <authorList>
            <consortium name="NIH - Xenopus Gene Collection (XGC) project"/>
        </authorList>
    </citation>
    <scope>NUCLEOTIDE SEQUENCE [LARGE SCALE MRNA]</scope>
    <source>
        <tissue>Embryo</tissue>
    </source>
</reference>
<evidence type="ECO:0000250" key="1">
    <source>
        <dbReference type="UniProtKB" id="Q7L4E1"/>
    </source>
</evidence>
<evidence type="ECO:0000255" key="2"/>
<evidence type="ECO:0000256" key="3">
    <source>
        <dbReference type="SAM" id="MobiDB-lite"/>
    </source>
</evidence>
<evidence type="ECO:0000305" key="4"/>
<gene>
    <name evidence="1" type="primary">miga2</name>
    <name type="synonym">fam73b</name>
</gene>
<sequence length="589" mass="65281">MAFQRAEGMSIIQALAMTVAEIPVFLYTTFGQSTFSQLRLSPGLRKVLFATALGTVALALAAHQLKRRKHKKKQITADNGGLKLGGVPGSVLPVRRSSSAKKGYSRSRVQSPSSKSNDTLSGISSLDPSKHSSSSHSLASVVAVNSSSINAAPAGPWESPEMDETLEEGDSNAENLYIQGMELFEEALHKWEQALNVGQRCRSNTPASQVNDLLNQSCSEGLSEDSQSGHFAGKLEALLYRAYNLQEEFGTSIPPDDLLMDLEGSLIFPLVESRRALMMDDEGSSTSEDSFFSAAELFETLQLNEVPFLPTKPAAAYEEALKLVHTGEVACRTLRTELLGCYNDQDFLAKLHCVRQAFEVLLLDDGNQLFFGEVGKQMITGLMQKAEKNPKGFLENYEEMLRYALKQDTWATTQRELKGRGVVCMNFFDIALDFILMDAFEDLESPPSSVLAVLRNRWLSDSFKETALATACWSVLKAKRRLLMVPDGFISHFYSVSEHVSPVLAYGFLGPKEHLTEVCNFFKNQIVQYLKDMFDLDNVRYSTIQSLAEDILHLSRRRSDILLGYLGVETVREMNGAVPVQTTEAELDL</sequence>
<feature type="chain" id="PRO_0000313661" description="Mitoguardin 2">
    <location>
        <begin position="1"/>
        <end position="589"/>
    </location>
</feature>
<feature type="transmembrane region" description="Helical" evidence="2">
    <location>
        <begin position="11"/>
        <end position="31"/>
    </location>
</feature>
<feature type="transmembrane region" description="Helical" evidence="2">
    <location>
        <begin position="42"/>
        <end position="62"/>
    </location>
</feature>
<feature type="region of interest" description="Disordered" evidence="3">
    <location>
        <begin position="87"/>
        <end position="134"/>
    </location>
</feature>
<feature type="compositionally biased region" description="Low complexity" evidence="3">
    <location>
        <begin position="106"/>
        <end position="116"/>
    </location>
</feature>
<feature type="compositionally biased region" description="Low complexity" evidence="3">
    <location>
        <begin position="123"/>
        <end position="134"/>
    </location>
</feature>
<name>MIGA2_XENLA</name>
<accession>Q6GR21</accession>
<organism>
    <name type="scientific">Xenopus laevis</name>
    <name type="common">African clawed frog</name>
    <dbReference type="NCBI Taxonomy" id="8355"/>
    <lineage>
        <taxon>Eukaryota</taxon>
        <taxon>Metazoa</taxon>
        <taxon>Chordata</taxon>
        <taxon>Craniata</taxon>
        <taxon>Vertebrata</taxon>
        <taxon>Euteleostomi</taxon>
        <taxon>Amphibia</taxon>
        <taxon>Batrachia</taxon>
        <taxon>Anura</taxon>
        <taxon>Pipoidea</taxon>
        <taxon>Pipidae</taxon>
        <taxon>Xenopodinae</taxon>
        <taxon>Xenopus</taxon>
        <taxon>Xenopus</taxon>
    </lineage>
</organism>
<dbReference type="EMBL" id="BC071113">
    <property type="protein sequence ID" value="AAH71113.1"/>
    <property type="molecule type" value="mRNA"/>
</dbReference>
<dbReference type="RefSeq" id="NP_001085347.1">
    <property type="nucleotide sequence ID" value="NM_001091878.1"/>
</dbReference>
<dbReference type="SMR" id="Q6GR21"/>
<dbReference type="GeneID" id="443773"/>
<dbReference type="KEGG" id="xla:443773"/>
<dbReference type="AGR" id="Xenbase:XB-GENE-996693"/>
<dbReference type="CTD" id="443773"/>
<dbReference type="Xenbase" id="XB-GENE-996693">
    <property type="gene designation" value="miga2.L"/>
</dbReference>
<dbReference type="OrthoDB" id="8880065at2759"/>
<dbReference type="Proteomes" id="UP000186698">
    <property type="component" value="Chromosome 8L"/>
</dbReference>
<dbReference type="Bgee" id="443773">
    <property type="expression patterns" value="Expressed in liver and 19 other cell types or tissues"/>
</dbReference>
<dbReference type="GO" id="GO:0005741">
    <property type="term" value="C:mitochondrial outer membrane"/>
    <property type="evidence" value="ECO:0007669"/>
    <property type="project" value="UniProtKB-SubCell"/>
</dbReference>
<dbReference type="GO" id="GO:0005886">
    <property type="term" value="C:plasma membrane"/>
    <property type="evidence" value="ECO:0000250"/>
    <property type="project" value="UniProtKB"/>
</dbReference>
<dbReference type="GO" id="GO:0046982">
    <property type="term" value="F:protein heterodimerization activity"/>
    <property type="evidence" value="ECO:0000250"/>
    <property type="project" value="UniProtKB"/>
</dbReference>
<dbReference type="GO" id="GO:0042803">
    <property type="term" value="F:protein homodimerization activity"/>
    <property type="evidence" value="ECO:0000250"/>
    <property type="project" value="UniProtKB"/>
</dbReference>
<dbReference type="GO" id="GO:0008053">
    <property type="term" value="P:mitochondrial fusion"/>
    <property type="evidence" value="ECO:0000250"/>
    <property type="project" value="UniProtKB"/>
</dbReference>
<dbReference type="InterPro" id="IPR019392">
    <property type="entry name" value="Miga"/>
</dbReference>
<dbReference type="PANTHER" id="PTHR21508">
    <property type="entry name" value="MITOGUARDIN"/>
    <property type="match status" value="1"/>
</dbReference>
<dbReference type="PANTHER" id="PTHR21508:SF4">
    <property type="entry name" value="MITOGUARDIN 2"/>
    <property type="match status" value="1"/>
</dbReference>
<dbReference type="Pfam" id="PF10265">
    <property type="entry name" value="Miga"/>
    <property type="match status" value="1"/>
</dbReference>
<comment type="function">
    <text evidence="1">Regulator of mitochondrial fusion: acts by forming homo- and heterodimers at the mitochondrial outer membrane and facilitating the formation of pld6/MitoPLD dimers. May act by regulating phospholipid metabolism via pld6/MitoPLD.</text>
</comment>
<comment type="subunit">
    <text evidence="1">Homodimer and heterodimer; forms heterodimers with miga1.</text>
</comment>
<comment type="subcellular location">
    <subcellularLocation>
        <location evidence="1">Mitochondrion outer membrane</location>
        <topology evidence="2">Multi-pass membrane protein</topology>
    </subcellularLocation>
</comment>
<comment type="similarity">
    <text evidence="4">Belongs to the mitoguardin family.</text>
</comment>